<proteinExistence type="evidence at transcript level"/>
<protein>
    <recommendedName>
        <fullName>Mitochondrial mRNA pseudouridine synthase RPUSD3</fullName>
        <ecNumber>5.4.99.-</ecNumber>
    </recommendedName>
    <alternativeName>
        <fullName>RNA pseudouridylate synthase domain-containing protein 3</fullName>
    </alternativeName>
</protein>
<keyword id="KW-0413">Isomerase</keyword>
<keyword id="KW-0496">Mitochondrion</keyword>
<keyword id="KW-0507">mRNA processing</keyword>
<keyword id="KW-0597">Phosphoprotein</keyword>
<keyword id="KW-1185">Reference proteome</keyword>
<keyword id="KW-0809">Transit peptide</keyword>
<sequence>MGGWRVLGQASGGWRRGLGIRATSTAAGFGTKARHQLQRRGASKPSDPPGDQPFPGLLRPGTFSREELVDVLRAAVVDSKGPLVTLNKPQGLPVTGKPGELTLLSVLPELSRSLGLGEQEVQVVRASGKEASGLVLLSSCSQTASRLQKFFTHSRRARKPTATYCAVTDGIPVTSEGKIQAALKLEHIDGVNLVVPVQSPSRKDIMEGVKRTLSHFRVVATGSGCALVQLQPLTVFPSQLQAHMALQLCPVLGDHTYSARVGTVLGQRFLLPVESTKPQRQVLDEALLGRLCLTASQAARLPLHLHLHCLRLPGARPRDPPIELLAPLPSYFSRTLQCLGLHYQ</sequence>
<dbReference type="EC" id="5.4.99.-"/>
<dbReference type="EMBL" id="BC110000">
    <property type="protein sequence ID" value="AAI10001.1"/>
    <property type="molecule type" value="mRNA"/>
</dbReference>
<dbReference type="RefSeq" id="NP_001033650.1">
    <property type="nucleotide sequence ID" value="NM_001038561.2"/>
</dbReference>
<dbReference type="SMR" id="Q2TBK7"/>
<dbReference type="FunCoup" id="Q2TBK7">
    <property type="interactions" value="350"/>
</dbReference>
<dbReference type="STRING" id="9913.ENSBTAP00000010478"/>
<dbReference type="PaxDb" id="9913-ENSBTAP00000010478"/>
<dbReference type="GeneID" id="534606"/>
<dbReference type="KEGG" id="bta:534606"/>
<dbReference type="CTD" id="285367"/>
<dbReference type="eggNOG" id="KOG1919">
    <property type="taxonomic scope" value="Eukaryota"/>
</dbReference>
<dbReference type="InParanoid" id="Q2TBK7"/>
<dbReference type="OrthoDB" id="428658at2759"/>
<dbReference type="Proteomes" id="UP000009136">
    <property type="component" value="Unplaced"/>
</dbReference>
<dbReference type="GO" id="GO:0005759">
    <property type="term" value="C:mitochondrial matrix"/>
    <property type="evidence" value="ECO:0007669"/>
    <property type="project" value="UniProtKB-SubCell"/>
</dbReference>
<dbReference type="GO" id="GO:0009982">
    <property type="term" value="F:pseudouridine synthase activity"/>
    <property type="evidence" value="ECO:0007669"/>
    <property type="project" value="InterPro"/>
</dbReference>
<dbReference type="GO" id="GO:0003723">
    <property type="term" value="F:RNA binding"/>
    <property type="evidence" value="ECO:0007669"/>
    <property type="project" value="InterPro"/>
</dbReference>
<dbReference type="GO" id="GO:0006397">
    <property type="term" value="P:mRNA processing"/>
    <property type="evidence" value="ECO:0007669"/>
    <property type="project" value="UniProtKB-KW"/>
</dbReference>
<dbReference type="GO" id="GO:0070131">
    <property type="term" value="P:positive regulation of mitochondrial translation"/>
    <property type="evidence" value="ECO:0000250"/>
    <property type="project" value="UniProtKB"/>
</dbReference>
<dbReference type="GO" id="GO:0001522">
    <property type="term" value="P:pseudouridine synthesis"/>
    <property type="evidence" value="ECO:0007669"/>
    <property type="project" value="InterPro"/>
</dbReference>
<dbReference type="CDD" id="cd02869">
    <property type="entry name" value="PseudoU_synth_RluA_like"/>
    <property type="match status" value="1"/>
</dbReference>
<dbReference type="Gene3D" id="3.30.2350.10">
    <property type="entry name" value="Pseudouridine synthase"/>
    <property type="match status" value="1"/>
</dbReference>
<dbReference type="InterPro" id="IPR020103">
    <property type="entry name" value="PsdUridine_synth_cat_dom_sf"/>
</dbReference>
<dbReference type="InterPro" id="IPR006145">
    <property type="entry name" value="PsdUridine_synth_RsuA/RluA"/>
</dbReference>
<dbReference type="InterPro" id="IPR050188">
    <property type="entry name" value="RluA_PseudoU_synthase"/>
</dbReference>
<dbReference type="PANTHER" id="PTHR21600:SF49">
    <property type="entry name" value="MITOCHONDRIAL MRNA PSEUDOURIDINE SYNTHASE RPUSD3"/>
    <property type="match status" value="1"/>
</dbReference>
<dbReference type="PANTHER" id="PTHR21600">
    <property type="entry name" value="MITOCHONDRIAL RNA PSEUDOURIDINE SYNTHASE"/>
    <property type="match status" value="1"/>
</dbReference>
<dbReference type="Pfam" id="PF00849">
    <property type="entry name" value="PseudoU_synth_2"/>
    <property type="match status" value="1"/>
</dbReference>
<dbReference type="SUPFAM" id="SSF55120">
    <property type="entry name" value="Pseudouridine synthase"/>
    <property type="match status" value="1"/>
</dbReference>
<comment type="function">
    <text evidence="1">Catalyzes uridine to pseudouridine isomerization (pseudouridylation) of specific mitochondrial mRNAs (mt-mRNAs), a post-transcriptional modification necessary for their translation. Acts at position 390 in COXI mt-mRNA and at position 697-699 in mitochondrial COXIII mt-mRNA. As a component of a functional protein-RNA module, consisting of RCC1L, NGRN, RPUSD3, RPUSD4, TRUB2, FASTKD2 and 16S mitochondrial ribosomal RNA (16S mt-rRNA), controls 16S mt-rRNA abundance and may play a role in mitochondrial ribosome biogenesis.</text>
</comment>
<comment type="catalytic activity">
    <reaction evidence="1">
        <text>a uridine in mRNA = a pseudouridine in mRNA</text>
        <dbReference type="Rhea" id="RHEA:56644"/>
        <dbReference type="Rhea" id="RHEA-COMP:14658"/>
        <dbReference type="Rhea" id="RHEA-COMP:14659"/>
        <dbReference type="ChEBI" id="CHEBI:65314"/>
        <dbReference type="ChEBI" id="CHEBI:65315"/>
    </reaction>
</comment>
<comment type="subunit">
    <text evidence="1">Forms a regulatory protein-RNA complex, consisting of RCC1L, NGRN, RPUSD3, RPUSD4, TRUB2, FASTKD2 and 16S mt-rRNA.</text>
</comment>
<comment type="subcellular location">
    <subcellularLocation>
        <location evidence="1">Mitochondrion matrix</location>
    </subcellularLocation>
    <text evidence="1">Localizes to mitochondrial RNA granules, platforms for post-transcriptional RNA modification and ribosome assembly.</text>
</comment>
<comment type="similarity">
    <text evidence="4">Belongs to the pseudouridine synthase RluA family.</text>
</comment>
<reference key="1">
    <citation type="submission" date="2005-11" db="EMBL/GenBank/DDBJ databases">
        <authorList>
            <consortium name="NIH - Mammalian Gene Collection (MGC) project"/>
        </authorList>
    </citation>
    <scope>NUCLEOTIDE SEQUENCE [LARGE SCALE MRNA]</scope>
    <source>
        <strain>Crossbred X Angus</strain>
        <tissue>Liver</tissue>
    </source>
</reference>
<feature type="transit peptide" description="Mitochondrion" evidence="2">
    <location>
        <begin position="1"/>
        <end position="41"/>
    </location>
</feature>
<feature type="chain" id="PRO_0000300821" description="Mitochondrial mRNA pseudouridine synthase RPUSD3">
    <location>
        <begin position="42"/>
        <end position="344"/>
    </location>
</feature>
<feature type="region of interest" description="Disordered" evidence="3">
    <location>
        <begin position="29"/>
        <end position="59"/>
    </location>
</feature>
<feature type="compositionally biased region" description="Basic residues" evidence="3">
    <location>
        <begin position="32"/>
        <end position="42"/>
    </location>
</feature>
<feature type="modified residue" description="Phosphoserine" evidence="1">
    <location>
        <position position="64"/>
    </location>
</feature>
<organism>
    <name type="scientific">Bos taurus</name>
    <name type="common">Bovine</name>
    <dbReference type="NCBI Taxonomy" id="9913"/>
    <lineage>
        <taxon>Eukaryota</taxon>
        <taxon>Metazoa</taxon>
        <taxon>Chordata</taxon>
        <taxon>Craniata</taxon>
        <taxon>Vertebrata</taxon>
        <taxon>Euteleostomi</taxon>
        <taxon>Mammalia</taxon>
        <taxon>Eutheria</taxon>
        <taxon>Laurasiatheria</taxon>
        <taxon>Artiodactyla</taxon>
        <taxon>Ruminantia</taxon>
        <taxon>Pecora</taxon>
        <taxon>Bovidae</taxon>
        <taxon>Bovinae</taxon>
        <taxon>Bos</taxon>
    </lineage>
</organism>
<gene>
    <name type="primary">RPUSD3</name>
</gene>
<accession>Q2TBK7</accession>
<name>RUSD3_BOVIN</name>
<evidence type="ECO:0000250" key="1">
    <source>
        <dbReference type="UniProtKB" id="Q6P087"/>
    </source>
</evidence>
<evidence type="ECO:0000255" key="2"/>
<evidence type="ECO:0000256" key="3">
    <source>
        <dbReference type="SAM" id="MobiDB-lite"/>
    </source>
</evidence>
<evidence type="ECO:0000305" key="4"/>